<dbReference type="EC" id="1.8.1.2" evidence="1"/>
<dbReference type="EMBL" id="CP001164">
    <property type="protein sequence ID" value="ACI38903.1"/>
    <property type="molecule type" value="Genomic_DNA"/>
</dbReference>
<dbReference type="RefSeq" id="WP_001290706.1">
    <property type="nucleotide sequence ID" value="NC_011353.1"/>
</dbReference>
<dbReference type="SMR" id="B5Z3C6"/>
<dbReference type="GeneID" id="75205593"/>
<dbReference type="KEGG" id="ecf:ECH74115_4017"/>
<dbReference type="HOGENOM" id="CLU_001975_3_2_6"/>
<dbReference type="UniPathway" id="UPA00140">
    <property type="reaction ID" value="UER00207"/>
</dbReference>
<dbReference type="GO" id="GO:0009337">
    <property type="term" value="C:sulfite reductase complex (NADPH)"/>
    <property type="evidence" value="ECO:0007669"/>
    <property type="project" value="InterPro"/>
</dbReference>
<dbReference type="GO" id="GO:0051539">
    <property type="term" value="F:4 iron, 4 sulfur cluster binding"/>
    <property type="evidence" value="ECO:0007669"/>
    <property type="project" value="UniProtKB-KW"/>
</dbReference>
<dbReference type="GO" id="GO:0020037">
    <property type="term" value="F:heme binding"/>
    <property type="evidence" value="ECO:0007669"/>
    <property type="project" value="InterPro"/>
</dbReference>
<dbReference type="GO" id="GO:0046872">
    <property type="term" value="F:metal ion binding"/>
    <property type="evidence" value="ECO:0007669"/>
    <property type="project" value="UniProtKB-KW"/>
</dbReference>
<dbReference type="GO" id="GO:0050661">
    <property type="term" value="F:NADP binding"/>
    <property type="evidence" value="ECO:0007669"/>
    <property type="project" value="InterPro"/>
</dbReference>
<dbReference type="GO" id="GO:0050311">
    <property type="term" value="F:sulfite reductase (ferredoxin) activity"/>
    <property type="evidence" value="ECO:0007669"/>
    <property type="project" value="TreeGrafter"/>
</dbReference>
<dbReference type="GO" id="GO:0004783">
    <property type="term" value="F:sulfite reductase (NADPH) activity"/>
    <property type="evidence" value="ECO:0007669"/>
    <property type="project" value="UniProtKB-UniRule"/>
</dbReference>
<dbReference type="GO" id="GO:0019344">
    <property type="term" value="P:cysteine biosynthetic process"/>
    <property type="evidence" value="ECO:0007669"/>
    <property type="project" value="UniProtKB-KW"/>
</dbReference>
<dbReference type="GO" id="GO:0070814">
    <property type="term" value="P:hydrogen sulfide biosynthetic process"/>
    <property type="evidence" value="ECO:0007669"/>
    <property type="project" value="UniProtKB-UniRule"/>
</dbReference>
<dbReference type="GO" id="GO:0000103">
    <property type="term" value="P:sulfate assimilation"/>
    <property type="evidence" value="ECO:0007669"/>
    <property type="project" value="UniProtKB-UniRule"/>
</dbReference>
<dbReference type="FunFam" id="3.30.413.10:FF:000003">
    <property type="entry name" value="Sulfite reductase [NADPH] hemoprotein beta-component"/>
    <property type="match status" value="1"/>
</dbReference>
<dbReference type="FunFam" id="3.30.413.10:FF:000004">
    <property type="entry name" value="Sulfite reductase [NADPH] hemoprotein beta-component"/>
    <property type="match status" value="1"/>
</dbReference>
<dbReference type="Gene3D" id="3.30.413.10">
    <property type="entry name" value="Sulfite Reductase Hemoprotein, domain 1"/>
    <property type="match status" value="2"/>
</dbReference>
<dbReference type="HAMAP" id="MF_01540">
    <property type="entry name" value="CysI"/>
    <property type="match status" value="1"/>
</dbReference>
<dbReference type="InterPro" id="IPR011786">
    <property type="entry name" value="CysI"/>
</dbReference>
<dbReference type="InterPro" id="IPR005117">
    <property type="entry name" value="NiRdtase/SiRdtase_haem-b_fer"/>
</dbReference>
<dbReference type="InterPro" id="IPR036136">
    <property type="entry name" value="Nit/Sulf_reduc_fer-like_dom_sf"/>
</dbReference>
<dbReference type="InterPro" id="IPR006067">
    <property type="entry name" value="NO2/SO3_Rdtase_4Fe4S_dom"/>
</dbReference>
<dbReference type="InterPro" id="IPR045169">
    <property type="entry name" value="NO2/SO3_Rdtase_4Fe4S_prot"/>
</dbReference>
<dbReference type="InterPro" id="IPR045854">
    <property type="entry name" value="NO2/SO3_Rdtase_4Fe4S_sf"/>
</dbReference>
<dbReference type="InterPro" id="IPR006066">
    <property type="entry name" value="NO2/SO3_Rdtase_FeS/sirohaem_BS"/>
</dbReference>
<dbReference type="NCBIfam" id="TIGR02041">
    <property type="entry name" value="CysI"/>
    <property type="match status" value="1"/>
</dbReference>
<dbReference type="NCBIfam" id="NF010029">
    <property type="entry name" value="PRK13504.1"/>
    <property type="match status" value="1"/>
</dbReference>
<dbReference type="PANTHER" id="PTHR11493:SF47">
    <property type="entry name" value="SULFITE REDUCTASE [NADPH] SUBUNIT BETA"/>
    <property type="match status" value="1"/>
</dbReference>
<dbReference type="PANTHER" id="PTHR11493">
    <property type="entry name" value="SULFITE REDUCTASE [NADPH] SUBUNIT BETA-RELATED"/>
    <property type="match status" value="1"/>
</dbReference>
<dbReference type="Pfam" id="PF01077">
    <property type="entry name" value="NIR_SIR"/>
    <property type="match status" value="1"/>
</dbReference>
<dbReference type="Pfam" id="PF03460">
    <property type="entry name" value="NIR_SIR_ferr"/>
    <property type="match status" value="2"/>
</dbReference>
<dbReference type="PRINTS" id="PR00397">
    <property type="entry name" value="SIROHAEM"/>
</dbReference>
<dbReference type="SUPFAM" id="SSF56014">
    <property type="entry name" value="Nitrite and sulphite reductase 4Fe-4S domain-like"/>
    <property type="match status" value="2"/>
</dbReference>
<dbReference type="SUPFAM" id="SSF55124">
    <property type="entry name" value="Nitrite/Sulfite reductase N-terminal domain-like"/>
    <property type="match status" value="2"/>
</dbReference>
<dbReference type="PROSITE" id="PS00365">
    <property type="entry name" value="NIR_SIR"/>
    <property type="match status" value="1"/>
</dbReference>
<feature type="chain" id="PRO_1000146644" description="Sulfite reductase [NADPH] hemoprotein beta-component">
    <location>
        <begin position="1"/>
        <end position="570"/>
    </location>
</feature>
<feature type="binding site" evidence="1">
    <location>
        <position position="434"/>
    </location>
    <ligand>
        <name>[4Fe-4S] cluster</name>
        <dbReference type="ChEBI" id="CHEBI:49883"/>
    </ligand>
</feature>
<feature type="binding site" evidence="1">
    <location>
        <position position="440"/>
    </location>
    <ligand>
        <name>[4Fe-4S] cluster</name>
        <dbReference type="ChEBI" id="CHEBI:49883"/>
    </ligand>
</feature>
<feature type="binding site" evidence="1">
    <location>
        <position position="479"/>
    </location>
    <ligand>
        <name>[4Fe-4S] cluster</name>
        <dbReference type="ChEBI" id="CHEBI:49883"/>
    </ligand>
</feature>
<feature type="binding site" evidence="1">
    <location>
        <position position="483"/>
    </location>
    <ligand>
        <name>[4Fe-4S] cluster</name>
        <dbReference type="ChEBI" id="CHEBI:49883"/>
    </ligand>
</feature>
<feature type="binding site" description="axial binding residue" evidence="1">
    <location>
        <position position="483"/>
    </location>
    <ligand>
        <name>siroheme</name>
        <dbReference type="ChEBI" id="CHEBI:60052"/>
    </ligand>
    <ligandPart>
        <name>Fe</name>
        <dbReference type="ChEBI" id="CHEBI:18248"/>
    </ligandPart>
</feature>
<comment type="function">
    <text evidence="1">Component of the sulfite reductase complex that catalyzes the 6-electron reduction of sulfite to sulfide. This is one of several activities required for the biosynthesis of L-cysteine from sulfate.</text>
</comment>
<comment type="catalytic activity">
    <reaction evidence="1">
        <text>hydrogen sulfide + 3 NADP(+) + 3 H2O = sulfite + 3 NADPH + 4 H(+)</text>
        <dbReference type="Rhea" id="RHEA:13801"/>
        <dbReference type="ChEBI" id="CHEBI:15377"/>
        <dbReference type="ChEBI" id="CHEBI:15378"/>
        <dbReference type="ChEBI" id="CHEBI:17359"/>
        <dbReference type="ChEBI" id="CHEBI:29919"/>
        <dbReference type="ChEBI" id="CHEBI:57783"/>
        <dbReference type="ChEBI" id="CHEBI:58349"/>
        <dbReference type="EC" id="1.8.1.2"/>
    </reaction>
</comment>
<comment type="cofactor">
    <cofactor evidence="1">
        <name>siroheme</name>
        <dbReference type="ChEBI" id="CHEBI:60052"/>
    </cofactor>
    <text evidence="1">Binds 1 siroheme per subunit.</text>
</comment>
<comment type="cofactor">
    <cofactor evidence="1">
        <name>[4Fe-4S] cluster</name>
        <dbReference type="ChEBI" id="CHEBI:49883"/>
    </cofactor>
    <text evidence="1">Binds 1 [4Fe-4S] cluster per subunit.</text>
</comment>
<comment type="pathway">
    <text evidence="1">Sulfur metabolism; hydrogen sulfide biosynthesis; hydrogen sulfide from sulfite (NADPH route): step 1/1.</text>
</comment>
<comment type="subunit">
    <text evidence="1">Alpha(8)-beta(8). The alpha component is a flavoprotein, the beta component is a hemoprotein.</text>
</comment>
<comment type="similarity">
    <text evidence="1">Belongs to the nitrite and sulfite reductase 4Fe-4S domain family.</text>
</comment>
<name>CYSI_ECO5E</name>
<accession>B5Z3C6</accession>
<evidence type="ECO:0000255" key="1">
    <source>
        <dbReference type="HAMAP-Rule" id="MF_01540"/>
    </source>
</evidence>
<protein>
    <recommendedName>
        <fullName evidence="1">Sulfite reductase [NADPH] hemoprotein beta-component</fullName>
        <shortName evidence="1">SiR-HP</shortName>
        <shortName evidence="1">SiRHP</shortName>
        <ecNumber evidence="1">1.8.1.2</ecNumber>
    </recommendedName>
</protein>
<proteinExistence type="inferred from homology"/>
<gene>
    <name evidence="1" type="primary">cysI</name>
    <name type="ordered locus">ECH74115_4017</name>
</gene>
<organism>
    <name type="scientific">Escherichia coli O157:H7 (strain EC4115 / EHEC)</name>
    <dbReference type="NCBI Taxonomy" id="444450"/>
    <lineage>
        <taxon>Bacteria</taxon>
        <taxon>Pseudomonadati</taxon>
        <taxon>Pseudomonadota</taxon>
        <taxon>Gammaproteobacteria</taxon>
        <taxon>Enterobacterales</taxon>
        <taxon>Enterobacteriaceae</taxon>
        <taxon>Escherichia</taxon>
    </lineage>
</organism>
<reference key="1">
    <citation type="journal article" date="2011" name="Proc. Natl. Acad. Sci. U.S.A.">
        <title>Genomic anatomy of Escherichia coli O157:H7 outbreaks.</title>
        <authorList>
            <person name="Eppinger M."/>
            <person name="Mammel M.K."/>
            <person name="Leclerc J.E."/>
            <person name="Ravel J."/>
            <person name="Cebula T.A."/>
        </authorList>
    </citation>
    <scope>NUCLEOTIDE SEQUENCE [LARGE SCALE GENOMIC DNA]</scope>
    <source>
        <strain>EC4115 / EHEC</strain>
    </source>
</reference>
<sequence>MSEKHPGPLVVEGKLTDAERMKLESNYLRGTIAEDLNDGLTGGFKGDNFLLIRFHGMYQQDDRDIRAERAEQKLEPRHAMLLRCRLPGGVITTKQWQAIDKFAGENTIYGSIRLTNRQTFQFHGILKKNVKPVHQMLHSVGLDALATANDMNRNVLCTSNPYESQLHAEAYEWAKKISEHLLPRTRAYAEIWLDQEKVATTDEEPILGQTYLPRKFKTTVVIPPQNDIDLHANDMNFVAIAENGKLVGFNLLVGGGLSIEHGNKKTYARTASEFGYLPLEHTLAVAEAVVTTQRDWGNRTDRKNAKTKYTLERVGVETFKAEVERRAGIKFEPIRPYEFTGRGDRIGWVKGIDDNWHLTLFIENGRILDYPGRPLKTGLLEIAKIHKGDFRITANQNLIIAGVPESEKAKIEKIAKESGLMNAVTPQRENSMACVSFPTCPLAMAEAERFLPSFIDNIDNLMAKHGVSDEHIVMRVTGCPNGCGRAMLAEVGLVGKAPGRYNLHLGGNRIGTRIPRMYKENITEPEILASLDELIGRWAKEREAGEGFGDFTVRAGIIRPVLDPARDLWD</sequence>
<keyword id="KW-0004">4Fe-4S</keyword>
<keyword id="KW-0028">Amino-acid biosynthesis</keyword>
<keyword id="KW-0198">Cysteine biosynthesis</keyword>
<keyword id="KW-0349">Heme</keyword>
<keyword id="KW-0408">Iron</keyword>
<keyword id="KW-0411">Iron-sulfur</keyword>
<keyword id="KW-0479">Metal-binding</keyword>
<keyword id="KW-0521">NADP</keyword>
<keyword id="KW-0560">Oxidoreductase</keyword>